<keyword id="KW-0007">Acetylation</keyword>
<keyword id="KW-0963">Cytoplasm</keyword>
<keyword id="KW-0539">Nucleus</keyword>
<keyword id="KW-0597">Phosphoprotein</keyword>
<keyword id="KW-0653">Protein transport</keyword>
<keyword id="KW-1185">Reference proteome</keyword>
<keyword id="KW-0694">RNA-binding</keyword>
<keyword id="KW-0813">Transport</keyword>
<evidence type="ECO:0000250" key="1"/>
<evidence type="ECO:0000250" key="2">
    <source>
        <dbReference type="UniProtKB" id="Q9H814"/>
    </source>
</evidence>
<evidence type="ECO:0000250" key="3">
    <source>
        <dbReference type="UniProtKB" id="Q9JJT9"/>
    </source>
</evidence>
<evidence type="ECO:0000256" key="4">
    <source>
        <dbReference type="SAM" id="MobiDB-lite"/>
    </source>
</evidence>
<evidence type="ECO:0000269" key="5">
    <source>
    </source>
</evidence>
<evidence type="ECO:0000305" key="6"/>
<evidence type="ECO:0007744" key="7">
    <source>
    </source>
</evidence>
<sequence length="385" mass="43166">MALEAGDMEEGQLSDSDSDMTVVPSDRPLQMAKVLGGGGAACAPVSNYRTVKHVDSSEESLDSDDDCSLWKRKRQKCHSPPPKPEPFPFGQSGQKPALNGGKKVNNIWGAVLQEQNQDAVATELGILGMEGTIDRSRQSETYNYLLAKKLAKKESQEYTKELDKDLDEYMHGDKKPGSKEEENGQGHLKRKRPVRDRLGNRVEMNYKGRYDITEEDSPEKVADEIAFRLQEPKKDLIARVVTILGNKKAIELLMETAEVEQNGGLFIMNGSRRRTPGGVFLNLLKNTPSISEEQIKDIFYIENQKEYENKKAARKRRTQLLGKKMKEAIKSLNFQEDDDTSRETFASDTNEALASLDEAQEGPGETKLDAEDAIEVDHPQDLDIF</sequence>
<accession>Q63068</accession>
<accession>Q4QQW9</accession>
<accession>Q5RJZ7</accession>
<comment type="function">
    <text evidence="1">A phosphoprotein adapter involved in the XPO1-mediated U snRNA export from the nucleus. Bridge components required for U snRNA export, the cap binding complex (CBC)-bound snRNA on the one hand and the GTPase Ran in its active GTP-bound form together with the export receptor XPO1 on the other. Its phosphorylation in the nucleus is required for U snRNA export complex assembly and export, while its dephosphorylation in the cytoplasm causes export complex disassembly. It is recycled back to the nucleus via the importin alpha/beta heterodimeric import receptor. The directionality of nuclear export is thought to be conferred by an asymmetric distribution of the GTP- and GDP-bound forms of Ran between the cytoplasm and nucleus. Its compartmentalized phosphorylation cycle may also contribute to the directionality of export. Binds strongly to m7G-capped U1 and U5 small nuclear RNAs (snRNAs) in a sequence-unspecific manner and phosphorylation-independent manner. Also plays a role in the biogenesis of U3 small nucleolar RNA (snoRNA). Involved in the U3 snoRNA transport from nucleoplasm to Cajal bodies. Binds strongly to m7G-capped U3, U8 and U13 precursor snoRNAs and weakly to trimethylated (TMG)-capped U3, U8 and U13 snoRNAs. Also binds to telomerase RNA (By similarity).</text>
</comment>
<comment type="subunit">
    <text evidence="2 3">Found in a U snRNA export complex with PHAX/RNUXA, NCBP1/CBP80, NCBP2/CBP20, RAN, XPO1 and m7G-capped RNA. Part of a precomplex with PHAX/RNUXA, NCBP1/CBP80, NCBP2/CBP20 and m7G-capped RNA. Interacts with NCBP1/CBP80. Found in a complex with snoRNA. Interacts with NCBP2/CBP20 (By similarity). Interacts with DDX39A; this interaction stimulates PHAX RNA binding activity (By similarity).</text>
</comment>
<comment type="subcellular location">
    <subcellularLocation>
        <location evidence="2">Nucleus</location>
    </subcellularLocation>
    <subcellularLocation>
        <location evidence="2">Nucleus</location>
        <location evidence="2">Nucleoplasm</location>
    </subcellularLocation>
    <subcellularLocation>
        <location evidence="2">Nucleus</location>
        <location evidence="2">Cajal body</location>
    </subcellularLocation>
    <subcellularLocation>
        <location evidence="2">Cytoplasm</location>
    </subcellularLocation>
    <text evidence="2">Shuttles between the nucleus and the cytoplasm. Shuttles between the nucleoplasm and Cajal bodies.</text>
</comment>
<comment type="tissue specificity">
    <text evidence="5">Expressed in dorsal root ganglia and sensory neuron cell bodies.</text>
</comment>
<comment type="PTM">
    <text>Phosphorylated in the nucleus. Dephosphorylated in the cytoplasm.</text>
</comment>
<comment type="similarity">
    <text evidence="6">Belongs to the PHAX family.</text>
</comment>
<comment type="sequence caution" evidence="6">
    <conflict type="frameshift">
        <sequence resource="EMBL-CDS" id="CAA48076"/>
    </conflict>
</comment>
<name>PHAX_RAT</name>
<dbReference type="EMBL" id="X67877">
    <property type="protein sequence ID" value="CAA48076.1"/>
    <property type="status" value="ALT_FRAME"/>
    <property type="molecule type" value="mRNA"/>
</dbReference>
<dbReference type="EMBL" id="BC086410">
    <property type="protein sequence ID" value="AAH86410.1"/>
    <property type="molecule type" value="mRNA"/>
</dbReference>
<dbReference type="EMBL" id="BC097932">
    <property type="protein sequence ID" value="AAH97932.1"/>
    <property type="molecule type" value="mRNA"/>
</dbReference>
<dbReference type="PIR" id="I60184">
    <property type="entry name" value="S33448"/>
</dbReference>
<dbReference type="RefSeq" id="NP_775156.2">
    <property type="nucleotide sequence ID" value="NM_173133.2"/>
</dbReference>
<dbReference type="SMR" id="Q63068"/>
<dbReference type="BioGRID" id="251908">
    <property type="interactions" value="1"/>
</dbReference>
<dbReference type="FunCoup" id="Q63068">
    <property type="interactions" value="2910"/>
</dbReference>
<dbReference type="STRING" id="10116.ENSRNOP00000019627"/>
<dbReference type="iPTMnet" id="Q63068"/>
<dbReference type="PhosphoSitePlus" id="Q63068"/>
<dbReference type="jPOST" id="Q63068"/>
<dbReference type="PaxDb" id="10116-ENSRNOP00000019627"/>
<dbReference type="Ensembl" id="ENSRNOT00000019627.5">
    <property type="protein sequence ID" value="ENSRNOP00000019627.3"/>
    <property type="gene ID" value="ENSRNOG00000014459.5"/>
</dbReference>
<dbReference type="GeneID" id="286917"/>
<dbReference type="KEGG" id="rno:286917"/>
<dbReference type="UCSC" id="RGD:708448">
    <property type="organism name" value="rat"/>
</dbReference>
<dbReference type="AGR" id="RGD:708448"/>
<dbReference type="CTD" id="51808"/>
<dbReference type="RGD" id="708448">
    <property type="gene designation" value="Phax"/>
</dbReference>
<dbReference type="eggNOG" id="KOG3948">
    <property type="taxonomic scope" value="Eukaryota"/>
</dbReference>
<dbReference type="GeneTree" id="ENSGT00390000011084"/>
<dbReference type="HOGENOM" id="CLU_058840_1_0_1"/>
<dbReference type="InParanoid" id="Q63068"/>
<dbReference type="OMA" id="EEGCIKK"/>
<dbReference type="OrthoDB" id="51933at9989"/>
<dbReference type="PhylomeDB" id="Q63068"/>
<dbReference type="TreeFam" id="TF321050"/>
<dbReference type="Reactome" id="R-RNO-6807505">
    <property type="pathway name" value="RNA polymerase II transcribes snRNA genes"/>
</dbReference>
<dbReference type="PRO" id="PR:Q63068"/>
<dbReference type="Proteomes" id="UP000002494">
    <property type="component" value="Chromosome 18"/>
</dbReference>
<dbReference type="Bgee" id="ENSRNOG00000014459">
    <property type="expression patterns" value="Expressed in cerebellum and 20 other cell types or tissues"/>
</dbReference>
<dbReference type="GO" id="GO:0015030">
    <property type="term" value="C:Cajal body"/>
    <property type="evidence" value="ECO:0007669"/>
    <property type="project" value="UniProtKB-SubCell"/>
</dbReference>
<dbReference type="GO" id="GO:0005737">
    <property type="term" value="C:cytoplasm"/>
    <property type="evidence" value="ECO:0000266"/>
    <property type="project" value="RGD"/>
</dbReference>
<dbReference type="GO" id="GO:0043025">
    <property type="term" value="C:neuronal cell body"/>
    <property type="evidence" value="ECO:0000314"/>
    <property type="project" value="RGD"/>
</dbReference>
<dbReference type="GO" id="GO:0005634">
    <property type="term" value="C:nucleus"/>
    <property type="evidence" value="ECO:0000266"/>
    <property type="project" value="RGD"/>
</dbReference>
<dbReference type="GO" id="GO:1990904">
    <property type="term" value="C:ribonucleoprotein complex"/>
    <property type="evidence" value="ECO:0000266"/>
    <property type="project" value="RGD"/>
</dbReference>
<dbReference type="GO" id="GO:0140262">
    <property type="term" value="F:mRNA cap binding complex binding"/>
    <property type="evidence" value="ECO:0000266"/>
    <property type="project" value="RGD"/>
</dbReference>
<dbReference type="GO" id="GO:0003723">
    <property type="term" value="F:RNA binding"/>
    <property type="evidence" value="ECO:0007669"/>
    <property type="project" value="UniProtKB-KW"/>
</dbReference>
<dbReference type="GO" id="GO:0015643">
    <property type="term" value="F:toxic substance binding"/>
    <property type="evidence" value="ECO:0000353"/>
    <property type="project" value="RGD"/>
</dbReference>
<dbReference type="GO" id="GO:0015031">
    <property type="term" value="P:protein transport"/>
    <property type="evidence" value="ECO:0007669"/>
    <property type="project" value="UniProtKB-KW"/>
</dbReference>
<dbReference type="GO" id="GO:0043489">
    <property type="term" value="P:RNA stabilization"/>
    <property type="evidence" value="ECO:0000266"/>
    <property type="project" value="RGD"/>
</dbReference>
<dbReference type="GO" id="GO:0006408">
    <property type="term" value="P:snRNA export from nucleus"/>
    <property type="evidence" value="ECO:0000266"/>
    <property type="project" value="RGD"/>
</dbReference>
<dbReference type="FunFam" id="1.10.10.1440:FF:000001">
    <property type="entry name" value="phosphorylated adapter RNA export protein-like"/>
    <property type="match status" value="1"/>
</dbReference>
<dbReference type="Gene3D" id="1.10.10.1440">
    <property type="entry name" value="PHAX RNA-binding domain"/>
    <property type="match status" value="1"/>
</dbReference>
<dbReference type="InterPro" id="IPR039047">
    <property type="entry name" value="PHAX"/>
</dbReference>
<dbReference type="InterPro" id="IPR019385">
    <property type="entry name" value="PHAX_RNA-binding_domain"/>
</dbReference>
<dbReference type="InterPro" id="IPR038092">
    <property type="entry name" value="PHAX_RNA-binding_sf"/>
</dbReference>
<dbReference type="PANTHER" id="PTHR13135">
    <property type="entry name" value="CYTOSOLIC RESINIFERATOXIN BINDING PROTEIN RBP-26"/>
    <property type="match status" value="1"/>
</dbReference>
<dbReference type="PANTHER" id="PTHR13135:SF0">
    <property type="entry name" value="PHOSPHORYLATED ADAPTER RNA EXPORT PROTEIN"/>
    <property type="match status" value="1"/>
</dbReference>
<dbReference type="Pfam" id="PF10258">
    <property type="entry name" value="PHAX_RNA-bd"/>
    <property type="match status" value="1"/>
</dbReference>
<reference key="1">
    <citation type="journal article" date="1994" name="Brain Res. Mol. Brain Res.">
        <title>Molecular cloning of a resiniferatoxin-binding protein.</title>
        <authorList>
            <person name="Ninkina N."/>
            <person name="Willoughby J."/>
            <person name="Beech M."/>
            <person name="Coore P."/>
            <person name="Wood J."/>
        </authorList>
    </citation>
    <scope>NUCLEOTIDE SEQUENCE [MRNA]</scope>
    <scope>TISSUE SPECIFICITY</scope>
    <source>
        <strain>Sprague-Dawley</strain>
    </source>
</reference>
<reference key="2">
    <citation type="journal article" date="2004" name="Genome Res.">
        <title>The status, quality, and expansion of the NIH full-length cDNA project: the Mammalian Gene Collection (MGC).</title>
        <authorList>
            <consortium name="The MGC Project Team"/>
        </authorList>
    </citation>
    <scope>NUCLEOTIDE SEQUENCE [LARGE SCALE MRNA]</scope>
    <source>
        <tissue>Ovary</tissue>
        <tissue>Thymus</tissue>
    </source>
</reference>
<reference key="3">
    <citation type="journal article" date="2012" name="Nat. Commun.">
        <title>Quantitative maps of protein phosphorylation sites across 14 different rat organs and tissues.</title>
        <authorList>
            <person name="Lundby A."/>
            <person name="Secher A."/>
            <person name="Lage K."/>
            <person name="Nordsborg N.B."/>
            <person name="Dmytriyev A."/>
            <person name="Lundby C."/>
            <person name="Olsen J.V."/>
        </authorList>
    </citation>
    <scope>PHOSPHORYLATION [LARGE SCALE ANALYSIS] AT SER-14; SER-56; SER-57; SER-60; SER-63 AND SER-217</scope>
    <scope>IDENTIFICATION BY MASS SPECTROMETRY [LARGE SCALE ANALYSIS]</scope>
</reference>
<gene>
    <name type="primary">Phax</name>
    <name type="synonym">Rnuxa</name>
</gene>
<organism>
    <name type="scientific">Rattus norvegicus</name>
    <name type="common">Rat</name>
    <dbReference type="NCBI Taxonomy" id="10116"/>
    <lineage>
        <taxon>Eukaryota</taxon>
        <taxon>Metazoa</taxon>
        <taxon>Chordata</taxon>
        <taxon>Craniata</taxon>
        <taxon>Vertebrata</taxon>
        <taxon>Euteleostomi</taxon>
        <taxon>Mammalia</taxon>
        <taxon>Eutheria</taxon>
        <taxon>Euarchontoglires</taxon>
        <taxon>Glires</taxon>
        <taxon>Rodentia</taxon>
        <taxon>Myomorpha</taxon>
        <taxon>Muroidea</taxon>
        <taxon>Muridae</taxon>
        <taxon>Murinae</taxon>
        <taxon>Rattus</taxon>
    </lineage>
</organism>
<protein>
    <recommendedName>
        <fullName>Phosphorylated adapter RNA export protein</fullName>
    </recommendedName>
    <alternativeName>
        <fullName>26 kDa resiniferatoxin-binding protein</fullName>
    </alternativeName>
    <alternativeName>
        <fullName>RBP-26</fullName>
    </alternativeName>
    <alternativeName>
        <fullName>RNA U small nuclear RNA export adapter protein</fullName>
    </alternativeName>
    <alternativeName>
        <fullName>RTX-42</fullName>
    </alternativeName>
    <alternativeName>
        <fullName>Resiniferatoxin-binding protein 2</fullName>
        <shortName>RBP-2</shortName>
    </alternativeName>
</protein>
<feature type="initiator methionine" description="Removed" evidence="2">
    <location>
        <position position="1"/>
    </location>
</feature>
<feature type="chain" id="PRO_0000239777" description="Phosphorylated adapter RNA export protein">
    <location>
        <begin position="2"/>
        <end position="385"/>
    </location>
</feature>
<feature type="region of interest" description="Disordered" evidence="4">
    <location>
        <begin position="1"/>
        <end position="26"/>
    </location>
</feature>
<feature type="region of interest" description="Necessary for interaction with CBP80" evidence="1">
    <location>
        <begin position="2"/>
        <end position="320"/>
    </location>
</feature>
<feature type="region of interest" description="Disordered" evidence="4">
    <location>
        <begin position="72"/>
        <end position="101"/>
    </location>
</feature>
<feature type="region of interest" description="Disordered" evidence="4">
    <location>
        <begin position="164"/>
        <end position="192"/>
    </location>
</feature>
<feature type="region of interest" description="Sufficient for poly U RNA-binding" evidence="1">
    <location>
        <begin position="219"/>
        <end position="319"/>
    </location>
</feature>
<feature type="region of interest" description="Necessary for poly U RNA-binding and snRNA export" evidence="1">
    <location>
        <begin position="270"/>
        <end position="278"/>
    </location>
</feature>
<feature type="region of interest" description="Disordered" evidence="4">
    <location>
        <begin position="334"/>
        <end position="385"/>
    </location>
</feature>
<feature type="short sequence motif" description="Nuclear localization signal" evidence="1">
    <location>
        <begin position="71"/>
        <end position="74"/>
    </location>
</feature>
<feature type="short sequence motif" description="Nuclear export signal" evidence="1">
    <location>
        <begin position="120"/>
        <end position="129"/>
    </location>
</feature>
<feature type="short sequence motif" description="Nuclear localization signal" evidence="1">
    <location>
        <begin position="189"/>
        <end position="192"/>
    </location>
</feature>
<feature type="compositionally biased region" description="Acidic residues" evidence="4">
    <location>
        <begin position="1"/>
        <end position="18"/>
    </location>
</feature>
<feature type="compositionally biased region" description="Basic and acidic residues" evidence="4">
    <location>
        <begin position="164"/>
        <end position="184"/>
    </location>
</feature>
<feature type="compositionally biased region" description="Polar residues" evidence="4">
    <location>
        <begin position="343"/>
        <end position="352"/>
    </location>
</feature>
<feature type="compositionally biased region" description="Basic and acidic residues" evidence="4">
    <location>
        <begin position="364"/>
        <end position="385"/>
    </location>
</feature>
<feature type="modified residue" description="N-acetylalanine" evidence="2">
    <location>
        <position position="2"/>
    </location>
</feature>
<feature type="modified residue" description="Phosphoserine" evidence="7">
    <location>
        <position position="14"/>
    </location>
</feature>
<feature type="modified residue" description="Phosphoserine" evidence="2">
    <location>
        <position position="16"/>
    </location>
</feature>
<feature type="modified residue" description="Phosphoserine" evidence="7">
    <location>
        <position position="56"/>
    </location>
</feature>
<feature type="modified residue" description="Phosphoserine" evidence="7">
    <location>
        <position position="57"/>
    </location>
</feature>
<feature type="modified residue" description="Phosphoserine" evidence="7">
    <location>
        <position position="60"/>
    </location>
</feature>
<feature type="modified residue" description="Phosphoserine" evidence="7">
    <location>
        <position position="63"/>
    </location>
</feature>
<feature type="modified residue" description="Phosphoserine" evidence="7">
    <location>
        <position position="217"/>
    </location>
</feature>
<feature type="modified residue" description="Phosphothreonine" evidence="2">
    <location>
        <position position="287"/>
    </location>
</feature>
<feature type="modified residue" description="Phosphoserine" evidence="2">
    <location>
        <position position="347"/>
    </location>
</feature>
<feature type="sequence conflict" description="In Ref. 1; CAA48076." evidence="6" ref="1">
    <original>P</original>
    <variation>Q</variation>
    <location>
        <position position="96"/>
    </location>
</feature>
<feature type="sequence conflict" description="In Ref. 1." evidence="6" ref="1">
    <original>E</original>
    <variation>D</variation>
    <location>
        <position position="375"/>
    </location>
</feature>
<proteinExistence type="evidence at protein level"/>